<reference key="1">
    <citation type="journal article" date="2004" name="J. Bacteriol.">
        <title>Complete genome sequence of Rickettsia typhi and comparison with sequences of other Rickettsiae.</title>
        <authorList>
            <person name="McLeod M.P."/>
            <person name="Qin X."/>
            <person name="Karpathy S.E."/>
            <person name="Gioia J."/>
            <person name="Highlander S.K."/>
            <person name="Fox G.E."/>
            <person name="McNeill T.Z."/>
            <person name="Jiang H."/>
            <person name="Muzny D."/>
            <person name="Jacob L.S."/>
            <person name="Hawes A.C."/>
            <person name="Sodergren E."/>
            <person name="Gill R."/>
            <person name="Hume J."/>
            <person name="Morgan M."/>
            <person name="Fan G."/>
            <person name="Amin A.G."/>
            <person name="Gibbs R.A."/>
            <person name="Hong C."/>
            <person name="Yu X.-J."/>
            <person name="Walker D.H."/>
            <person name="Weinstock G.M."/>
        </authorList>
    </citation>
    <scope>NUCLEOTIDE SEQUENCE [LARGE SCALE GENOMIC DNA]</scope>
    <source>
        <strain>ATCC VR-144 / Wilmington</strain>
    </source>
</reference>
<evidence type="ECO:0000255" key="1">
    <source>
        <dbReference type="HAMAP-Rule" id="MF_00503"/>
    </source>
</evidence>
<evidence type="ECO:0000305" key="2"/>
<proteinExistence type="inferred from homology"/>
<comment type="function">
    <text evidence="1">Binds to the 23S rRNA.</text>
</comment>
<comment type="similarity">
    <text evidence="1">Belongs to the bacterial ribosomal protein bL9 family.</text>
</comment>
<accession>Q68XR7</accession>
<sequence length="171" mass="19351">MEIILIKPVRKLGKIGDILKVANGFGRNYLLPQKLAIRATKSNKELIVKQKHEFEAKDKQIRAEVEKINTLIKDQQLVFIRQTSDDCKLFGSVTNKDIADKLSKNISYNISHSNVILDKQIKSTGIYTVEIRLHAELTAIVTVIVARSDSEAQDYLREQKTENSADLAESE</sequence>
<organism>
    <name type="scientific">Rickettsia typhi (strain ATCC VR-144 / Wilmington)</name>
    <dbReference type="NCBI Taxonomy" id="257363"/>
    <lineage>
        <taxon>Bacteria</taxon>
        <taxon>Pseudomonadati</taxon>
        <taxon>Pseudomonadota</taxon>
        <taxon>Alphaproteobacteria</taxon>
        <taxon>Rickettsiales</taxon>
        <taxon>Rickettsiaceae</taxon>
        <taxon>Rickettsieae</taxon>
        <taxon>Rickettsia</taxon>
        <taxon>typhus group</taxon>
    </lineage>
</organism>
<name>RL9_RICTY</name>
<protein>
    <recommendedName>
        <fullName evidence="1">Large ribosomal subunit protein bL9</fullName>
    </recommendedName>
    <alternativeName>
        <fullName evidence="2">50S ribosomal protein L9</fullName>
    </alternativeName>
</protein>
<feature type="chain" id="PRO_0000236580" description="Large ribosomal subunit protein bL9">
    <location>
        <begin position="1"/>
        <end position="171"/>
    </location>
</feature>
<gene>
    <name evidence="1" type="primary">rplI</name>
    <name type="ordered locus">RT0089</name>
</gene>
<dbReference type="EMBL" id="AE017197">
    <property type="protein sequence ID" value="AAU03575.1"/>
    <property type="molecule type" value="Genomic_DNA"/>
</dbReference>
<dbReference type="RefSeq" id="WP_011190562.1">
    <property type="nucleotide sequence ID" value="NC_006142.1"/>
</dbReference>
<dbReference type="SMR" id="Q68XR7"/>
<dbReference type="KEGG" id="rty:RT0089"/>
<dbReference type="eggNOG" id="COG0359">
    <property type="taxonomic scope" value="Bacteria"/>
</dbReference>
<dbReference type="HOGENOM" id="CLU_078938_3_0_5"/>
<dbReference type="OrthoDB" id="9788336at2"/>
<dbReference type="Proteomes" id="UP000000604">
    <property type="component" value="Chromosome"/>
</dbReference>
<dbReference type="GO" id="GO:1990904">
    <property type="term" value="C:ribonucleoprotein complex"/>
    <property type="evidence" value="ECO:0007669"/>
    <property type="project" value="UniProtKB-KW"/>
</dbReference>
<dbReference type="GO" id="GO:0005840">
    <property type="term" value="C:ribosome"/>
    <property type="evidence" value="ECO:0007669"/>
    <property type="project" value="UniProtKB-KW"/>
</dbReference>
<dbReference type="GO" id="GO:0019843">
    <property type="term" value="F:rRNA binding"/>
    <property type="evidence" value="ECO:0007669"/>
    <property type="project" value="UniProtKB-UniRule"/>
</dbReference>
<dbReference type="GO" id="GO:0003735">
    <property type="term" value="F:structural constituent of ribosome"/>
    <property type="evidence" value="ECO:0007669"/>
    <property type="project" value="InterPro"/>
</dbReference>
<dbReference type="GO" id="GO:0006412">
    <property type="term" value="P:translation"/>
    <property type="evidence" value="ECO:0007669"/>
    <property type="project" value="UniProtKB-UniRule"/>
</dbReference>
<dbReference type="Gene3D" id="3.10.430.100">
    <property type="entry name" value="Ribosomal protein L9, C-terminal domain"/>
    <property type="match status" value="1"/>
</dbReference>
<dbReference type="Gene3D" id="3.40.5.10">
    <property type="entry name" value="Ribosomal protein L9, N-terminal domain"/>
    <property type="match status" value="1"/>
</dbReference>
<dbReference type="HAMAP" id="MF_00503">
    <property type="entry name" value="Ribosomal_bL9"/>
    <property type="match status" value="1"/>
</dbReference>
<dbReference type="InterPro" id="IPR000244">
    <property type="entry name" value="Ribosomal_bL9"/>
</dbReference>
<dbReference type="InterPro" id="IPR009027">
    <property type="entry name" value="Ribosomal_bL9/RNase_H1_N"/>
</dbReference>
<dbReference type="InterPro" id="IPR020594">
    <property type="entry name" value="Ribosomal_bL9_bac/chp"/>
</dbReference>
<dbReference type="InterPro" id="IPR020069">
    <property type="entry name" value="Ribosomal_bL9_C"/>
</dbReference>
<dbReference type="InterPro" id="IPR036791">
    <property type="entry name" value="Ribosomal_bL9_C_sf"/>
</dbReference>
<dbReference type="InterPro" id="IPR020070">
    <property type="entry name" value="Ribosomal_bL9_N"/>
</dbReference>
<dbReference type="InterPro" id="IPR036935">
    <property type="entry name" value="Ribosomal_bL9_N_sf"/>
</dbReference>
<dbReference type="NCBIfam" id="TIGR00158">
    <property type="entry name" value="L9"/>
    <property type="match status" value="1"/>
</dbReference>
<dbReference type="PANTHER" id="PTHR21368">
    <property type="entry name" value="50S RIBOSOMAL PROTEIN L9"/>
    <property type="match status" value="1"/>
</dbReference>
<dbReference type="Pfam" id="PF03948">
    <property type="entry name" value="Ribosomal_L9_C"/>
    <property type="match status" value="1"/>
</dbReference>
<dbReference type="Pfam" id="PF01281">
    <property type="entry name" value="Ribosomal_L9_N"/>
    <property type="match status" value="1"/>
</dbReference>
<dbReference type="SUPFAM" id="SSF55658">
    <property type="entry name" value="L9 N-domain-like"/>
    <property type="match status" value="1"/>
</dbReference>
<dbReference type="SUPFAM" id="SSF55653">
    <property type="entry name" value="Ribosomal protein L9 C-domain"/>
    <property type="match status" value="1"/>
</dbReference>
<dbReference type="PROSITE" id="PS00651">
    <property type="entry name" value="RIBOSOMAL_L9"/>
    <property type="match status" value="1"/>
</dbReference>
<keyword id="KW-0687">Ribonucleoprotein</keyword>
<keyword id="KW-0689">Ribosomal protein</keyword>
<keyword id="KW-0694">RNA-binding</keyword>
<keyword id="KW-0699">rRNA-binding</keyword>